<protein>
    <recommendedName>
        <fullName>Histone-lysine N-methyltransferase mes-2</fullName>
        <ecNumber>2.1.1.356</ecNumber>
    </recommendedName>
    <alternativeName>
        <fullName>E(z) homolog</fullName>
    </alternativeName>
    <alternativeName>
        <fullName>Maternal-effect sterile protein 2</fullName>
    </alternativeName>
</protein>
<accession>O17514</accession>
<accession>O62335</accession>
<proteinExistence type="evidence at protein level"/>
<feature type="chain" id="PRO_0000213994" description="Histone-lysine N-methyltransferase mes-2">
    <location>
        <begin position="1"/>
        <end position="773"/>
    </location>
</feature>
<feature type="domain" description="CXC" evidence="2">
    <location>
        <begin position="505"/>
        <end position="614"/>
    </location>
</feature>
<feature type="domain" description="SET" evidence="1">
    <location>
        <begin position="616"/>
        <end position="737"/>
    </location>
</feature>
<feature type="region of interest" description="Interaction with mes-6">
    <location>
        <begin position="1"/>
        <end position="194"/>
    </location>
</feature>
<feature type="region of interest" description="Disordered" evidence="3">
    <location>
        <begin position="1"/>
        <end position="33"/>
    </location>
</feature>
<feature type="region of interest" description="Disordered" evidence="3">
    <location>
        <begin position="749"/>
        <end position="773"/>
    </location>
</feature>
<feature type="compositionally biased region" description="Polar residues" evidence="3">
    <location>
        <begin position="1"/>
        <end position="13"/>
    </location>
</feature>
<feature type="compositionally biased region" description="Basic and acidic residues" evidence="3">
    <location>
        <begin position="750"/>
        <end position="759"/>
    </location>
</feature>
<feature type="mutagenesis site" description="In bn48; maternal-effect mutation. Progeny defects in gonad proliferation. Germ cell degeneration. Reduced levels of 'H3-K27Me2' and 'H3-K27Me3'." evidence="6 12">
    <original>SK</original>
    <variation>PE</variation>
    <location>
        <begin position="628"/>
        <end position="629"/>
    </location>
</feature>
<feature type="mutagenesis site" description="In bn72; maternal-effect mutation. Progeny defects in gonad proliferation. Germ cell degeneration. Reduced levels of 'H3-K27Me2' and 'H3-K27Me3'." evidence="6 12">
    <original>Y</original>
    <variation>H</variation>
    <location>
        <position position="674"/>
    </location>
</feature>
<feature type="sequence conflict" description="In Ref. 1; AAC27124." evidence="13" ref="1">
    <original>RK</original>
    <variation>VQ</variation>
    <location>
        <begin position="483"/>
        <end position="484"/>
    </location>
</feature>
<keyword id="KW-0217">Developmental protein</keyword>
<keyword id="KW-0489">Methyltransferase</keyword>
<keyword id="KW-0539">Nucleus</keyword>
<keyword id="KW-1185">Reference proteome</keyword>
<keyword id="KW-0678">Repressor</keyword>
<keyword id="KW-0949">S-adenosyl-L-methionine</keyword>
<keyword id="KW-0804">Transcription</keyword>
<keyword id="KW-0805">Transcription regulation</keyword>
<keyword id="KW-0808">Transferase</keyword>
<dbReference type="EC" id="2.1.1.356"/>
<dbReference type="EMBL" id="AF011893">
    <property type="protein sequence ID" value="AAC27124.1"/>
    <property type="molecule type" value="mRNA"/>
</dbReference>
<dbReference type="EMBL" id="BX284602">
    <property type="protein sequence ID" value="CAB05589.2"/>
    <property type="molecule type" value="Genomic_DNA"/>
</dbReference>
<dbReference type="EMBL" id="Z81515">
    <property type="protein sequence ID" value="CAB05589.2"/>
    <property type="status" value="JOINED"/>
    <property type="molecule type" value="Genomic_DNA"/>
</dbReference>
<dbReference type="PIR" id="T21436">
    <property type="entry name" value="T21436"/>
</dbReference>
<dbReference type="RefSeq" id="NP_496992.3">
    <property type="nucleotide sequence ID" value="NM_064591.5"/>
</dbReference>
<dbReference type="BioGRID" id="40377">
    <property type="interactions" value="7"/>
</dbReference>
<dbReference type="ComplexPortal" id="CPX-368">
    <property type="entry name" value="Polycomb Repressive Complex 2"/>
</dbReference>
<dbReference type="FunCoup" id="O17514">
    <property type="interactions" value="2330"/>
</dbReference>
<dbReference type="IntAct" id="O17514">
    <property type="interactions" value="2"/>
</dbReference>
<dbReference type="STRING" id="6239.R06A4.7.1"/>
<dbReference type="PaxDb" id="6239-R06A4.7"/>
<dbReference type="PeptideAtlas" id="O17514"/>
<dbReference type="EnsemblMetazoa" id="R06A4.7.1">
    <property type="protein sequence ID" value="R06A4.7.1"/>
    <property type="gene ID" value="WBGene00003220"/>
</dbReference>
<dbReference type="GeneID" id="175096"/>
<dbReference type="KEGG" id="cel:CELE_R06A4.7"/>
<dbReference type="UCSC" id="R06A4.7">
    <property type="organism name" value="c. elegans"/>
</dbReference>
<dbReference type="AGR" id="WB:WBGene00003220"/>
<dbReference type="CTD" id="175096"/>
<dbReference type="WormBase" id="R06A4.7">
    <property type="protein sequence ID" value="CE28067"/>
    <property type="gene ID" value="WBGene00003220"/>
    <property type="gene designation" value="mes-2"/>
</dbReference>
<dbReference type="eggNOG" id="KOG1079">
    <property type="taxonomic scope" value="Eukaryota"/>
</dbReference>
<dbReference type="HOGENOM" id="CLU_014126_0_0_1"/>
<dbReference type="InParanoid" id="O17514"/>
<dbReference type="OMA" id="CRAQCNT"/>
<dbReference type="OrthoDB" id="6141102at2759"/>
<dbReference type="PhylomeDB" id="O17514"/>
<dbReference type="Reactome" id="R-CEL-2559580">
    <property type="pathway name" value="Oxidative Stress Induced Senescence"/>
</dbReference>
<dbReference type="Reactome" id="R-CEL-8943724">
    <property type="pathway name" value="Regulation of PTEN gene transcription"/>
</dbReference>
<dbReference type="PRO" id="PR:O17514"/>
<dbReference type="Proteomes" id="UP000001940">
    <property type="component" value="Chromosome II"/>
</dbReference>
<dbReference type="Bgee" id="WBGene00003220">
    <property type="expression patterns" value="Expressed in adult organism and 5 other cell types or tissues"/>
</dbReference>
<dbReference type="GO" id="GO:0035098">
    <property type="term" value="C:ESC/E(Z) complex"/>
    <property type="evidence" value="ECO:0000318"/>
    <property type="project" value="GO_Central"/>
</dbReference>
<dbReference type="GO" id="GO:0000786">
    <property type="term" value="C:nucleosome"/>
    <property type="evidence" value="ECO:0000314"/>
    <property type="project" value="WormBase"/>
</dbReference>
<dbReference type="GO" id="GO:0005634">
    <property type="term" value="C:nucleus"/>
    <property type="evidence" value="ECO:0000318"/>
    <property type="project" value="GO_Central"/>
</dbReference>
<dbReference type="GO" id="GO:0031519">
    <property type="term" value="C:PcG protein complex"/>
    <property type="evidence" value="ECO:0000353"/>
    <property type="project" value="WormBase"/>
</dbReference>
<dbReference type="GO" id="GO:0003682">
    <property type="term" value="F:chromatin binding"/>
    <property type="evidence" value="ECO:0000318"/>
    <property type="project" value="GO_Central"/>
</dbReference>
<dbReference type="GO" id="GO:0046976">
    <property type="term" value="F:histone H3K27 methyltransferase activity"/>
    <property type="evidence" value="ECO:0000315"/>
    <property type="project" value="WormBase"/>
</dbReference>
<dbReference type="GO" id="GO:0140951">
    <property type="term" value="F:histone H3K27 trimethyltransferase activity"/>
    <property type="evidence" value="ECO:0007669"/>
    <property type="project" value="UniProtKB-EC"/>
</dbReference>
<dbReference type="GO" id="GO:0042054">
    <property type="term" value="F:histone methyltransferase activity"/>
    <property type="evidence" value="ECO:0000314"/>
    <property type="project" value="WormBase"/>
</dbReference>
<dbReference type="GO" id="GO:0040029">
    <property type="term" value="P:epigenetic regulation of gene expression"/>
    <property type="evidence" value="ECO:0000315"/>
    <property type="project" value="WormBase"/>
</dbReference>
<dbReference type="GO" id="GO:0007276">
    <property type="term" value="P:gamete generation"/>
    <property type="evidence" value="ECO:0000315"/>
    <property type="project" value="WormBase"/>
</dbReference>
<dbReference type="GO" id="GO:0007281">
    <property type="term" value="P:germ cell development"/>
    <property type="evidence" value="ECO:0000315"/>
    <property type="project" value="WormBase"/>
</dbReference>
<dbReference type="GO" id="GO:0042078">
    <property type="term" value="P:germ-line stem cell division"/>
    <property type="evidence" value="ECO:0000315"/>
    <property type="project" value="WormBase"/>
</dbReference>
<dbReference type="GO" id="GO:0031507">
    <property type="term" value="P:heterochromatin formation"/>
    <property type="evidence" value="ECO:0000318"/>
    <property type="project" value="GO_Central"/>
</dbReference>
<dbReference type="GO" id="GO:0032259">
    <property type="term" value="P:methylation"/>
    <property type="evidence" value="ECO:0007669"/>
    <property type="project" value="UniProtKB-KW"/>
</dbReference>
<dbReference type="GO" id="GO:0010629">
    <property type="term" value="P:negative regulation of gene expression"/>
    <property type="evidence" value="ECO:0000314"/>
    <property type="project" value="ComplexPortal"/>
</dbReference>
<dbReference type="GO" id="GO:0010468">
    <property type="term" value="P:regulation of gene expression"/>
    <property type="evidence" value="ECO:0000315"/>
    <property type="project" value="UniProtKB"/>
</dbReference>
<dbReference type="GO" id="GO:0006357">
    <property type="term" value="P:regulation of transcription by RNA polymerase II"/>
    <property type="evidence" value="ECO:0000250"/>
    <property type="project" value="WormBase"/>
</dbReference>
<dbReference type="GO" id="GO:0009888">
    <property type="term" value="P:tissue development"/>
    <property type="evidence" value="ECO:0000315"/>
    <property type="project" value="UniProtKB"/>
</dbReference>
<dbReference type="CDD" id="cd10519">
    <property type="entry name" value="SET_EZH"/>
    <property type="match status" value="1"/>
</dbReference>
<dbReference type="FunFam" id="2.170.270.10:FF:000001">
    <property type="entry name" value="Putative histone-lysine N-methyltransferase EZH2"/>
    <property type="match status" value="1"/>
</dbReference>
<dbReference type="Gene3D" id="2.170.270.10">
    <property type="entry name" value="SET domain"/>
    <property type="match status" value="1"/>
</dbReference>
<dbReference type="InterPro" id="IPR026489">
    <property type="entry name" value="CXC_dom"/>
</dbReference>
<dbReference type="InterPro" id="IPR045318">
    <property type="entry name" value="EZH1/2-like"/>
</dbReference>
<dbReference type="InterPro" id="IPR041355">
    <property type="entry name" value="Pre-SET_CXC"/>
</dbReference>
<dbReference type="InterPro" id="IPR001214">
    <property type="entry name" value="SET_dom"/>
</dbReference>
<dbReference type="InterPro" id="IPR046341">
    <property type="entry name" value="SET_dom_sf"/>
</dbReference>
<dbReference type="PANTHER" id="PTHR45747">
    <property type="entry name" value="HISTONE-LYSINE N-METHYLTRANSFERASE E(Z)"/>
    <property type="match status" value="1"/>
</dbReference>
<dbReference type="PANTHER" id="PTHR45747:SF4">
    <property type="entry name" value="HISTONE-LYSINE N-METHYLTRANSFERASE E(Z)"/>
    <property type="match status" value="1"/>
</dbReference>
<dbReference type="Pfam" id="PF18264">
    <property type="entry name" value="preSET_CXC"/>
    <property type="match status" value="1"/>
</dbReference>
<dbReference type="Pfam" id="PF00856">
    <property type="entry name" value="SET"/>
    <property type="match status" value="1"/>
</dbReference>
<dbReference type="SMART" id="SM00317">
    <property type="entry name" value="SET"/>
    <property type="match status" value="1"/>
</dbReference>
<dbReference type="SUPFAM" id="SSF82199">
    <property type="entry name" value="SET domain"/>
    <property type="match status" value="1"/>
</dbReference>
<dbReference type="PROSITE" id="PS51633">
    <property type="entry name" value="CXC"/>
    <property type="match status" value="1"/>
</dbReference>
<dbReference type="PROSITE" id="PS50280">
    <property type="entry name" value="SET"/>
    <property type="match status" value="1"/>
</dbReference>
<gene>
    <name evidence="14" type="primary">mes-2</name>
    <name evidence="14" type="ORF">R06A4.7</name>
</gene>
<evidence type="ECO:0000255" key="1">
    <source>
        <dbReference type="PROSITE-ProRule" id="PRU00190"/>
    </source>
</evidence>
<evidence type="ECO:0000255" key="2">
    <source>
        <dbReference type="PROSITE-ProRule" id="PRU00970"/>
    </source>
</evidence>
<evidence type="ECO:0000256" key="3">
    <source>
        <dbReference type="SAM" id="MobiDB-lite"/>
    </source>
</evidence>
<evidence type="ECO:0000269" key="4">
    <source>
    </source>
</evidence>
<evidence type="ECO:0000269" key="5">
    <source>
    </source>
</evidence>
<evidence type="ECO:0000269" key="6">
    <source>
    </source>
</evidence>
<evidence type="ECO:0000269" key="7">
    <source>
    </source>
</evidence>
<evidence type="ECO:0000269" key="8">
    <source>
    </source>
</evidence>
<evidence type="ECO:0000269" key="9">
    <source>
    </source>
</evidence>
<evidence type="ECO:0000269" key="10">
    <source>
    </source>
</evidence>
<evidence type="ECO:0000269" key="11">
    <source>
    </source>
</evidence>
<evidence type="ECO:0000269" key="12">
    <source>
    </source>
</evidence>
<evidence type="ECO:0000305" key="13"/>
<evidence type="ECO:0000312" key="14">
    <source>
        <dbReference type="WormBase" id="R06A4.7"/>
    </source>
</evidence>
<name>MES2_CAEEL</name>
<sequence>MSNSEPSTSTPSGKTKKRGKKCETSMGKSKKSKNLPRFVKIQPIFSSEKIKETVCEQGIEECKRMLKGHFNAIKDDYDIRVKDELDTDIKDWLKDASSSVNEYRRRLQENLGEGRTIAKFSFKNCEKYEENDYKVSDSTVTWIKPDRTEEGDLMKKFRAPCSRIEVGDISPPMIYWVPIEQSVATPDQLRLTHMPYFGDGIDDGNIYEHLIDMFPDGIHGFSDNWSYVNDWILYKLCRAALKDYQGSPDVFYYTLYRLWPNKSSQREFSSAFPVLCENFAEKGFDPSSLEPWKKTKIAEGAQNLRNPTCYACLAYTCAIHGFKAEIPIEFPNGEFYNAMLPLPNNPENDGKMCSGNCWKSVTMKEVSEVLVPDSEEILQKEVKIYFMKSRIAKMPIEDGALIVNIYVFNTYIPFCEFVKKYVDEDDEESKIRSCRDAYHLMMSMAENVSARRLKMGQPSNRLSIKDRVNNFRRNQLSQEKAKRKLRHDSLRIQALRDGLDAEKLIREDDMRDSQRNSEKVRMTAVTPITACRHAGPCNATAENCACRENGVCSYMCKCDINCSQRFPGCNCAAGQCYTKACQCYRANWECNPMTCNMCKCDAIDSNIIKCRNFGMTRMIQKRTYCGPSKIAGNGLFLLEPAEKDEFITEYTGERISDDEAERRGAIYDRYQCSYIFNIETGGAIDSYKIGNLARFANHDSKNPTCYARTMVVAGEHRIGFYAKRRLEISEELTFDYSYSGEHQIAFRMVQTKERSEKPSRPKSQKLSKPMTSE</sequence>
<comment type="function">
    <text evidence="5 6 7 8 9">Polycomb group (PcG) protein. Catalytic subunit of a the mes-2/mes-3/mes-6 complex, which methylates 'Lys-27' of histone H3, leading to transcriptional repression of the affected target genes. PcG proteins act by forming multiprotein complexes, which are required to maintain the transcriptionally repressive state of homeotic genes throughout development. In association with the nfya-1-NF-Y complex, may play a role in repressing the expression of the homeobox protein egl-5 in tissues such as the head (PubMed:17574230). PcG proteins are not required to initiate repression, but to maintain it during later stages of development. The mes-2/mes-3/mes-6 complex may participate in the global inactivation of the X chromosomes in germline cells. This complex is required to exclude mes-4 from the inactivated X-chromosomes in germline cells (PubMed:12077420, PubMed:15380065). Required for small-RNA-induced H3K27 trimethylation (PubMed:26365259). Involved in the negative regulation of lifespan in a germline-independent fashion (PubMed:22212395).</text>
</comment>
<comment type="catalytic activity">
    <reaction>
        <text>L-lysyl(27)-[histone H3] + 3 S-adenosyl-L-methionine = N(6),N(6),N(6)-trimethyl-L-lysyl(27)-[histone H3] + 3 S-adenosyl-L-homocysteine + 3 H(+)</text>
        <dbReference type="Rhea" id="RHEA:60292"/>
        <dbReference type="Rhea" id="RHEA-COMP:15535"/>
        <dbReference type="Rhea" id="RHEA-COMP:15548"/>
        <dbReference type="ChEBI" id="CHEBI:15378"/>
        <dbReference type="ChEBI" id="CHEBI:29969"/>
        <dbReference type="ChEBI" id="CHEBI:57856"/>
        <dbReference type="ChEBI" id="CHEBI:59789"/>
        <dbReference type="ChEBI" id="CHEBI:61961"/>
        <dbReference type="EC" id="2.1.1.356"/>
    </reaction>
</comment>
<comment type="subunit">
    <text evidence="4 6">Interacts directly with mes-6 via its N-terminal domain (PubMed:11320248). Forms a heterotrimeric complex with mes-3 and mes-6 (PubMed:11320248, PubMed:15380065). Does not interact with mes-4 (PubMed:11320248).</text>
</comment>
<comment type="interaction">
    <interactant intactId="EBI-11615731">
        <id>O17514</id>
    </interactant>
    <interactant intactId="EBI-314965">
        <id>Q9GYS1</id>
        <label>mes-6</label>
    </interactant>
    <organismsDiffer>false</organismsDiffer>
    <experiments>5</experiments>
</comment>
<comment type="subcellular location">
    <subcellularLocation>
        <location evidence="12">Nucleus</location>
    </subcellularLocation>
</comment>
<comment type="tissue specificity">
    <text evidence="11 12">In adults, it is predominantly expressed in the germline, and weakly expressed in intestinal cells (PubMed:29702639, PubMed:9609829). Expressed in the hypoderm (PubMed:29702639).</text>
</comment>
<comment type="developmental stage">
    <text evidence="12">Expressed both maternally and zygotically. Expressed in all cells of early embryos. In late embryos and L1 larva, it is weakly expressed, while it is expressed at intermediate levels in the germline of L4 larvae.</text>
</comment>
<comment type="disruption phenotype">
    <text evidence="7 8 10">RNAi-mediated knockdown results in extended lifespan in wild type worms and in a glp-1(e2141) mutant background which lacks a germline (PubMed:22212395). Also leads to reduced H3K27me3 levels on metaphase chromosomes (PubMed:26904949). Double RNAi-mediated knockdown together with mes-6 RNAi results in ectopic expression of the homeobox protein egl-5 in the head region (PubMed:17574230). This ectopic expression of egl-5 in the head region is enhanced in a nfya-1 bp4 mutant background (PubMed:17574230). In addition in this background in males, there is ectopic expression of egl-5 in the mid-body region including in seam cells and hypodermal nuclei, and there is ectopic ray formation (PubMed:17574230).</text>
</comment>
<comment type="similarity">
    <text evidence="1">Belongs to the class V-like SAM-binding methyltransferase superfamily. Histone-lysine methyltransferase family. EZ subfamily.</text>
</comment>
<reference key="1">
    <citation type="journal article" date="1998" name="Development">
        <title>MES-2, a maternal protein essential for viability of the germline in Caenorhabditis elegans, is homologous to a Drosophila Polycomb group protein.</title>
        <authorList>
            <person name="Holdeman R."/>
            <person name="Nehrt S."/>
            <person name="Strome S."/>
        </authorList>
    </citation>
    <scope>NUCLEOTIDE SEQUENCE [MRNA]</scope>
    <scope>SUBCELLULAR LOCATION</scope>
    <scope>TISSUE SPECIFICITY</scope>
    <scope>DEVELOPMENTAL STAGE</scope>
    <scope>MUTAGENESIS OF 628-SER-LYS-629 AND TYR-674</scope>
    <source>
        <strain>Bristol N2</strain>
    </source>
</reference>
<reference key="2">
    <citation type="journal article" date="1998" name="Science">
        <title>Genome sequence of the nematode C. elegans: a platform for investigating biology.</title>
        <authorList>
            <consortium name="The C. elegans sequencing consortium"/>
        </authorList>
    </citation>
    <scope>NUCLEOTIDE SEQUENCE [LARGE SCALE GENOMIC DNA]</scope>
    <source>
        <strain>Bristol N2</strain>
    </source>
</reference>
<reference key="3">
    <citation type="journal article" date="2001" name="Proc. Natl. Acad. Sci. U.S.A.">
        <title>The Caenorhabditis elegans maternal-effect sterile proteins, MES-2, MES-3, and MES-6, are associated in a complex in embryos.</title>
        <authorList>
            <person name="Xu L."/>
            <person name="Fong Y."/>
            <person name="Strome S."/>
        </authorList>
    </citation>
    <scope>IDENTIFICATION IN A COMPLEX WITH MES-3 AND MES-6</scope>
</reference>
<reference key="4">
    <citation type="journal article" date="2002" name="Science">
        <title>Regulation of the different chromatin states of autosomes and X chromosomes in the germ line of C. elegans.</title>
        <authorList>
            <person name="Fong Y."/>
            <person name="Bender L."/>
            <person name="Wang W."/>
            <person name="Strome S."/>
        </authorList>
    </citation>
    <scope>FUNCTION</scope>
</reference>
<reference key="5">
    <citation type="journal article" date="2004" name="Curr. Biol.">
        <title>The MES-2/MES-3/MES-6 complex and regulation of histone H3 methylation in C. elegans.</title>
        <authorList>
            <person name="Bender L.B."/>
            <person name="Cao R."/>
            <person name="Zhang Y."/>
            <person name="Strome S."/>
        </authorList>
    </citation>
    <scope>FUNCTION</scope>
    <scope>IDENTIFICATION IN A COMPLEX WITH MES-3 AND MES-6</scope>
    <scope>MUTAGENESIS OF 628-SER-LYS-629 AND TYR-674</scope>
</reference>
<reference key="6">
    <citation type="journal article" date="2007" name="Dev. Biol.">
        <title>Transcription factor NFY globally represses the expression of the C. elegans Hox gene Abdominal-B homolog egl-5.</title>
        <authorList>
            <person name="Deng H."/>
            <person name="Sun Y."/>
            <person name="Zhang Y."/>
            <person name="Luo X."/>
            <person name="Hou W."/>
            <person name="Yan L."/>
            <person name="Chen Y."/>
            <person name="Tian E."/>
            <person name="Han J."/>
            <person name="Zhang H."/>
        </authorList>
    </citation>
    <scope>FUNCTION</scope>
    <scope>DISRUPTION PHENOTYPE</scope>
</reference>
<reference key="7">
    <citation type="journal article" date="2012" name="Aging Cell">
        <title>Two SET domain containing genes link epigenetic changes and aging in Caenorhabditis elegans.</title>
        <authorList>
            <person name="Ni Z."/>
            <person name="Ebata A."/>
            <person name="Alipanahiramandi E."/>
            <person name="Lee S.S."/>
        </authorList>
    </citation>
    <scope>FUNCTION</scope>
    <scope>DISRUPTION PHENOTYPE</scope>
</reference>
<reference key="8">
    <citation type="journal article" date="2015" name="Curr. Biol.">
        <title>The Nrde pathway mediates small-RNA-directed histone H3 lysine 27 trimethylation in Caenorhabditis elegans.</title>
        <authorList>
            <person name="Mao H."/>
            <person name="Zhu C."/>
            <person name="Zong D."/>
            <person name="Weng C."/>
            <person name="Yang X."/>
            <person name="Huang H."/>
            <person name="Liu D."/>
            <person name="Feng X."/>
            <person name="Guang S."/>
        </authorList>
    </citation>
    <scope>FUNCTION</scope>
</reference>
<reference key="9">
    <citation type="journal article" date="2016" name="Cell Rep.">
        <title>RbAp46/48(LIN-53) is required for holocentromere assembly in Caenorhabditis elegans.</title>
        <authorList>
            <person name="Lee B.C."/>
            <person name="Lin Z."/>
            <person name="Yuen K.W."/>
        </authorList>
    </citation>
    <scope>DISRUPTION PHENOTYPE</scope>
</reference>
<reference key="10">
    <citation type="journal article" date="2018" name="PLoS Genet.">
        <title>A Caenorhabditis elegans protein with a PRDM9-like SET domain localizes to chromatin-associated foci and promotes spermatocyte gene expression, sperm production and fertility.</title>
        <authorList>
            <person name="Engert C.G."/>
            <person name="Droste R."/>
            <person name="van Oudenaarden A."/>
            <person name="Horvitz H.R."/>
        </authorList>
    </citation>
    <scope>TISSUE SPECIFICITY</scope>
</reference>
<organism>
    <name type="scientific">Caenorhabditis elegans</name>
    <dbReference type="NCBI Taxonomy" id="6239"/>
    <lineage>
        <taxon>Eukaryota</taxon>
        <taxon>Metazoa</taxon>
        <taxon>Ecdysozoa</taxon>
        <taxon>Nematoda</taxon>
        <taxon>Chromadorea</taxon>
        <taxon>Rhabditida</taxon>
        <taxon>Rhabditina</taxon>
        <taxon>Rhabditomorpha</taxon>
        <taxon>Rhabditoidea</taxon>
        <taxon>Rhabditidae</taxon>
        <taxon>Peloderinae</taxon>
        <taxon>Caenorhabditis</taxon>
    </lineage>
</organism>